<keyword id="KW-0012">Acyltransferase</keyword>
<keyword id="KW-0963">Cytoplasm</keyword>
<keyword id="KW-0408">Iron</keyword>
<keyword id="KW-0479">Metal-binding</keyword>
<keyword id="KW-0808">Transferase</keyword>
<keyword id="KW-0819">tRNA processing</keyword>
<organism>
    <name type="scientific">Campylobacter concisus (strain 13826)</name>
    <dbReference type="NCBI Taxonomy" id="360104"/>
    <lineage>
        <taxon>Bacteria</taxon>
        <taxon>Pseudomonadati</taxon>
        <taxon>Campylobacterota</taxon>
        <taxon>Epsilonproteobacteria</taxon>
        <taxon>Campylobacterales</taxon>
        <taxon>Campylobacteraceae</taxon>
        <taxon>Campylobacter</taxon>
    </lineage>
</organism>
<comment type="function">
    <text evidence="1">Required for the formation of a threonylcarbamoyl group on adenosine at position 37 (t(6)A37) in tRNAs that read codons beginning with adenine. Is involved in the transfer of the threonylcarbamoyl moiety of threonylcarbamoyl-AMP (TC-AMP) to the N6 group of A37, together with TsaE and TsaB. TsaD likely plays a direct catalytic role in this reaction.</text>
</comment>
<comment type="catalytic activity">
    <reaction evidence="1">
        <text>L-threonylcarbamoyladenylate + adenosine(37) in tRNA = N(6)-L-threonylcarbamoyladenosine(37) in tRNA + AMP + H(+)</text>
        <dbReference type="Rhea" id="RHEA:37059"/>
        <dbReference type="Rhea" id="RHEA-COMP:10162"/>
        <dbReference type="Rhea" id="RHEA-COMP:10163"/>
        <dbReference type="ChEBI" id="CHEBI:15378"/>
        <dbReference type="ChEBI" id="CHEBI:73682"/>
        <dbReference type="ChEBI" id="CHEBI:74411"/>
        <dbReference type="ChEBI" id="CHEBI:74418"/>
        <dbReference type="ChEBI" id="CHEBI:456215"/>
        <dbReference type="EC" id="2.3.1.234"/>
    </reaction>
</comment>
<comment type="cofactor">
    <cofactor evidence="1">
        <name>Fe(2+)</name>
        <dbReference type="ChEBI" id="CHEBI:29033"/>
    </cofactor>
    <text evidence="1">Binds 1 Fe(2+) ion per subunit.</text>
</comment>
<comment type="subcellular location">
    <subcellularLocation>
        <location evidence="1">Cytoplasm</location>
    </subcellularLocation>
</comment>
<comment type="similarity">
    <text evidence="1">Belongs to the KAE1 / TsaD family.</text>
</comment>
<gene>
    <name evidence="1" type="primary">tsaD</name>
    <name type="synonym">gcp</name>
    <name type="ordered locus">Ccon26_14140</name>
    <name type="ORF">CCC13826_0417</name>
</gene>
<name>TSAD_CAMC1</name>
<accession>A7ZEQ3</accession>
<evidence type="ECO:0000255" key="1">
    <source>
        <dbReference type="HAMAP-Rule" id="MF_01445"/>
    </source>
</evidence>
<proteinExistence type="inferred from homology"/>
<reference key="1">
    <citation type="submission" date="2007-10" db="EMBL/GenBank/DDBJ databases">
        <title>Genome sequence of Campylobacter concisus 13826 isolated from human feces.</title>
        <authorList>
            <person name="Fouts D.E."/>
            <person name="Mongodin E.F."/>
            <person name="Puiu D."/>
            <person name="Sebastian Y."/>
            <person name="Miller W.G."/>
            <person name="Mandrell R.E."/>
            <person name="On S."/>
            <person name="Nelson K.E."/>
        </authorList>
    </citation>
    <scope>NUCLEOTIDE SEQUENCE [LARGE SCALE GENOMIC DNA]</scope>
    <source>
        <strain>13826</strain>
    </source>
</reference>
<protein>
    <recommendedName>
        <fullName evidence="1">tRNA N6-adenosine threonylcarbamoyltransferase</fullName>
        <ecNumber evidence="1">2.3.1.234</ecNumber>
    </recommendedName>
    <alternativeName>
        <fullName evidence="1">N6-L-threonylcarbamoyladenine synthase</fullName>
        <shortName evidence="1">t(6)A synthase</shortName>
    </alternativeName>
    <alternativeName>
        <fullName evidence="1">t(6)A37 threonylcarbamoyladenosine biosynthesis protein TsaD</fullName>
    </alternativeName>
    <alternativeName>
        <fullName evidence="1">tRNA threonylcarbamoyladenosine biosynthesis protein TsaD</fullName>
    </alternativeName>
</protein>
<feature type="chain" id="PRO_1000024425" description="tRNA N6-adenosine threonylcarbamoyltransferase">
    <location>
        <begin position="1"/>
        <end position="334"/>
    </location>
</feature>
<feature type="binding site" evidence="1">
    <location>
        <position position="107"/>
    </location>
    <ligand>
        <name>Fe cation</name>
        <dbReference type="ChEBI" id="CHEBI:24875"/>
    </ligand>
</feature>
<feature type="binding site" evidence="1">
    <location>
        <position position="111"/>
    </location>
    <ligand>
        <name>Fe cation</name>
        <dbReference type="ChEBI" id="CHEBI:24875"/>
    </ligand>
</feature>
<feature type="binding site" evidence="1">
    <location>
        <begin position="129"/>
        <end position="133"/>
    </location>
    <ligand>
        <name>substrate</name>
    </ligand>
</feature>
<feature type="binding site" evidence="1">
    <location>
        <position position="162"/>
    </location>
    <ligand>
        <name>substrate</name>
    </ligand>
</feature>
<feature type="binding site" evidence="1">
    <location>
        <position position="175"/>
    </location>
    <ligand>
        <name>substrate</name>
    </ligand>
</feature>
<feature type="binding site" evidence="1">
    <location>
        <position position="269"/>
    </location>
    <ligand>
        <name>substrate</name>
    </ligand>
</feature>
<feature type="binding site" evidence="1">
    <location>
        <position position="297"/>
    </location>
    <ligand>
        <name>Fe cation</name>
        <dbReference type="ChEBI" id="CHEBI:24875"/>
    </ligand>
</feature>
<sequence>MILGIESSCDDSSVALIDEETLEQIYYKKISQEEEHAIFGGVVPELAARLHTKALPALLNDILLNLKDINAIAVTNEPGLSVSLIGGVSMAKALSIALNIPLIAVNHLVGHIYSLFLDREATFPLGVLLVSGGHTMILEINENGEILELASTSDDSFGESFDKVAKMLDLGYPGGTVVQENALLCEDKDRFKFTVPLLHDKRLEYSFSGLKNQVRVEISKLKTITQKDIADICYAFENTACEHILNKLEKVFKLRNFKRFGVVGGASANLNLRKRLEVLCQKNVCELLLAPLEFCSDNALMIARAGREKYFKKEFINHSELTINPRVGFKKFEI</sequence>
<dbReference type="EC" id="2.3.1.234" evidence="1"/>
<dbReference type="EMBL" id="CP000792">
    <property type="protein sequence ID" value="EAT99229.1"/>
    <property type="molecule type" value="Genomic_DNA"/>
</dbReference>
<dbReference type="RefSeq" id="WP_012140159.1">
    <property type="nucleotide sequence ID" value="NC_009802.2"/>
</dbReference>
<dbReference type="SMR" id="A7ZEQ3"/>
<dbReference type="STRING" id="360104.CCC13826_0417"/>
<dbReference type="KEGG" id="cco:CCC13826_0417"/>
<dbReference type="eggNOG" id="COG0533">
    <property type="taxonomic scope" value="Bacteria"/>
</dbReference>
<dbReference type="HOGENOM" id="CLU_023208_0_3_7"/>
<dbReference type="OrthoDB" id="9806197at2"/>
<dbReference type="Proteomes" id="UP000001121">
    <property type="component" value="Chromosome"/>
</dbReference>
<dbReference type="GO" id="GO:0005737">
    <property type="term" value="C:cytoplasm"/>
    <property type="evidence" value="ECO:0007669"/>
    <property type="project" value="UniProtKB-SubCell"/>
</dbReference>
<dbReference type="GO" id="GO:0005506">
    <property type="term" value="F:iron ion binding"/>
    <property type="evidence" value="ECO:0007669"/>
    <property type="project" value="UniProtKB-UniRule"/>
</dbReference>
<dbReference type="GO" id="GO:0061711">
    <property type="term" value="F:N(6)-L-threonylcarbamoyladenine synthase activity"/>
    <property type="evidence" value="ECO:0007669"/>
    <property type="project" value="UniProtKB-EC"/>
</dbReference>
<dbReference type="GO" id="GO:0002949">
    <property type="term" value="P:tRNA threonylcarbamoyladenosine modification"/>
    <property type="evidence" value="ECO:0007669"/>
    <property type="project" value="UniProtKB-UniRule"/>
</dbReference>
<dbReference type="Gene3D" id="3.30.420.40">
    <property type="match status" value="2"/>
</dbReference>
<dbReference type="HAMAP" id="MF_01445">
    <property type="entry name" value="TsaD"/>
    <property type="match status" value="1"/>
</dbReference>
<dbReference type="InterPro" id="IPR043129">
    <property type="entry name" value="ATPase_NBD"/>
</dbReference>
<dbReference type="InterPro" id="IPR000905">
    <property type="entry name" value="Gcp-like_dom"/>
</dbReference>
<dbReference type="InterPro" id="IPR017861">
    <property type="entry name" value="KAE1/TsaD"/>
</dbReference>
<dbReference type="InterPro" id="IPR017860">
    <property type="entry name" value="Peptidase_M22_CS"/>
</dbReference>
<dbReference type="InterPro" id="IPR022450">
    <property type="entry name" value="TsaD"/>
</dbReference>
<dbReference type="NCBIfam" id="TIGR00329">
    <property type="entry name" value="gcp_kae1"/>
    <property type="match status" value="1"/>
</dbReference>
<dbReference type="NCBIfam" id="TIGR03723">
    <property type="entry name" value="T6A_TsaD_YgjD"/>
    <property type="match status" value="1"/>
</dbReference>
<dbReference type="PANTHER" id="PTHR11735">
    <property type="entry name" value="TRNA N6-ADENOSINE THREONYLCARBAMOYLTRANSFERASE"/>
    <property type="match status" value="1"/>
</dbReference>
<dbReference type="PANTHER" id="PTHR11735:SF6">
    <property type="entry name" value="TRNA N6-ADENOSINE THREONYLCARBAMOYLTRANSFERASE, MITOCHONDRIAL"/>
    <property type="match status" value="1"/>
</dbReference>
<dbReference type="Pfam" id="PF00814">
    <property type="entry name" value="TsaD"/>
    <property type="match status" value="1"/>
</dbReference>
<dbReference type="PRINTS" id="PR00789">
    <property type="entry name" value="OSIALOPTASE"/>
</dbReference>
<dbReference type="SUPFAM" id="SSF53067">
    <property type="entry name" value="Actin-like ATPase domain"/>
    <property type="match status" value="1"/>
</dbReference>
<dbReference type="PROSITE" id="PS01016">
    <property type="entry name" value="GLYCOPROTEASE"/>
    <property type="match status" value="1"/>
</dbReference>